<dbReference type="EC" id="6.3.2.2" evidence="1"/>
<dbReference type="EMBL" id="CP000094">
    <property type="protein sequence ID" value="ABA72001.1"/>
    <property type="molecule type" value="Genomic_DNA"/>
</dbReference>
<dbReference type="SMR" id="Q3KJQ5"/>
<dbReference type="KEGG" id="pfo:Pfl01_0257"/>
<dbReference type="eggNOG" id="COG2918">
    <property type="taxonomic scope" value="Bacteria"/>
</dbReference>
<dbReference type="HOGENOM" id="CLU_020728_3_0_6"/>
<dbReference type="UniPathway" id="UPA00142">
    <property type="reaction ID" value="UER00209"/>
</dbReference>
<dbReference type="Proteomes" id="UP000002704">
    <property type="component" value="Chromosome"/>
</dbReference>
<dbReference type="GO" id="GO:0005829">
    <property type="term" value="C:cytosol"/>
    <property type="evidence" value="ECO:0007669"/>
    <property type="project" value="TreeGrafter"/>
</dbReference>
<dbReference type="GO" id="GO:0005524">
    <property type="term" value="F:ATP binding"/>
    <property type="evidence" value="ECO:0007669"/>
    <property type="project" value="UniProtKB-KW"/>
</dbReference>
<dbReference type="GO" id="GO:0004357">
    <property type="term" value="F:glutamate-cysteine ligase activity"/>
    <property type="evidence" value="ECO:0007669"/>
    <property type="project" value="UniProtKB-UniRule"/>
</dbReference>
<dbReference type="GO" id="GO:0046872">
    <property type="term" value="F:metal ion binding"/>
    <property type="evidence" value="ECO:0007669"/>
    <property type="project" value="TreeGrafter"/>
</dbReference>
<dbReference type="GO" id="GO:0006750">
    <property type="term" value="P:glutathione biosynthetic process"/>
    <property type="evidence" value="ECO:0007669"/>
    <property type="project" value="UniProtKB-UniRule"/>
</dbReference>
<dbReference type="Gene3D" id="3.30.590.20">
    <property type="match status" value="1"/>
</dbReference>
<dbReference type="HAMAP" id="MF_00578">
    <property type="entry name" value="Glu_cys_ligase"/>
    <property type="match status" value="1"/>
</dbReference>
<dbReference type="InterPro" id="IPR014746">
    <property type="entry name" value="Gln_synth/guanido_kin_cat_dom"/>
</dbReference>
<dbReference type="InterPro" id="IPR007370">
    <property type="entry name" value="Glu_cys_ligase"/>
</dbReference>
<dbReference type="InterPro" id="IPR006334">
    <property type="entry name" value="Glut_cys_ligase"/>
</dbReference>
<dbReference type="NCBIfam" id="TIGR01434">
    <property type="entry name" value="glu_cys_ligase"/>
    <property type="match status" value="1"/>
</dbReference>
<dbReference type="PANTHER" id="PTHR38761">
    <property type="entry name" value="GLUTAMATE--CYSTEINE LIGASE"/>
    <property type="match status" value="1"/>
</dbReference>
<dbReference type="PANTHER" id="PTHR38761:SF1">
    <property type="entry name" value="GLUTAMATE--CYSTEINE LIGASE"/>
    <property type="match status" value="1"/>
</dbReference>
<dbReference type="Pfam" id="PF04262">
    <property type="entry name" value="Glu_cys_ligase"/>
    <property type="match status" value="1"/>
</dbReference>
<dbReference type="SUPFAM" id="SSF55931">
    <property type="entry name" value="Glutamine synthetase/guanido kinase"/>
    <property type="match status" value="1"/>
</dbReference>
<comment type="catalytic activity">
    <reaction evidence="1">
        <text>L-cysteine + L-glutamate + ATP = gamma-L-glutamyl-L-cysteine + ADP + phosphate + H(+)</text>
        <dbReference type="Rhea" id="RHEA:13285"/>
        <dbReference type="ChEBI" id="CHEBI:15378"/>
        <dbReference type="ChEBI" id="CHEBI:29985"/>
        <dbReference type="ChEBI" id="CHEBI:30616"/>
        <dbReference type="ChEBI" id="CHEBI:35235"/>
        <dbReference type="ChEBI" id="CHEBI:43474"/>
        <dbReference type="ChEBI" id="CHEBI:58173"/>
        <dbReference type="ChEBI" id="CHEBI:456216"/>
        <dbReference type="EC" id="6.3.2.2"/>
    </reaction>
</comment>
<comment type="pathway">
    <text evidence="1">Sulfur metabolism; glutathione biosynthesis; glutathione from L-cysteine and L-glutamate: step 1/2.</text>
</comment>
<comment type="similarity">
    <text evidence="1">Belongs to the glutamate--cysteine ligase type 1 family. Type 1 subfamily.</text>
</comment>
<gene>
    <name evidence="1" type="primary">gshA</name>
    <name type="ordered locus">Pfl01_0257</name>
</gene>
<keyword id="KW-0067">ATP-binding</keyword>
<keyword id="KW-0317">Glutathione biosynthesis</keyword>
<keyword id="KW-0436">Ligase</keyword>
<keyword id="KW-0547">Nucleotide-binding</keyword>
<proteinExistence type="inferred from homology"/>
<evidence type="ECO:0000255" key="1">
    <source>
        <dbReference type="HAMAP-Rule" id="MF_00578"/>
    </source>
</evidence>
<protein>
    <recommendedName>
        <fullName evidence="1">Glutamate--cysteine ligase</fullName>
        <ecNumber evidence="1">6.3.2.2</ecNumber>
    </recommendedName>
    <alternativeName>
        <fullName evidence="1">Gamma-ECS</fullName>
        <shortName evidence="1">GCS</shortName>
    </alternativeName>
    <alternativeName>
        <fullName evidence="1">Gamma-glutamylcysteine synthetase</fullName>
    </alternativeName>
</protein>
<feature type="chain" id="PRO_1000025182" description="Glutamate--cysteine ligase">
    <location>
        <begin position="1"/>
        <end position="532"/>
    </location>
</feature>
<organism>
    <name type="scientific">Pseudomonas fluorescens (strain Pf0-1)</name>
    <dbReference type="NCBI Taxonomy" id="205922"/>
    <lineage>
        <taxon>Bacteria</taxon>
        <taxon>Pseudomonadati</taxon>
        <taxon>Pseudomonadota</taxon>
        <taxon>Gammaproteobacteria</taxon>
        <taxon>Pseudomonadales</taxon>
        <taxon>Pseudomonadaceae</taxon>
        <taxon>Pseudomonas</taxon>
    </lineage>
</organism>
<accession>Q3KJQ5</accession>
<sequence>MKESKLSELLNRRLALLGERANLSLLEQCLHGIERECLRVTGEGRLAQTPHPEALGSALTNEQITTDYSESLLEFITPALPDPADTLASLDKIHRFAYSKLGNEYLWSPSMPCPLPAEEDIPIAYYGTSNIGQLKYVYRKGLALRYGKTMQCIAGIHYNFSLPEKLWPLLKEAEGFVGTDRDFQSSSYIALIRNFRRYSWLLMYLFGASPALDAGFLRGRAHQLEQLDPDTLYLPYATSLRMSDLGYQSNAQAGLTPCYNDLASYTDSLRKAVATPYAPYVEVGTHQDGEWVQLNTNILQIENEYYSNIRPKRVTYTGERPIQALMARGIQYVEVRCLDINPFLPMGIDLTESRFLDAFLLYCALNESPLLTNNSCGNATSNFLSVVKEGRRPGLQLQRDGQPVELKEWAAELLEKIAPLAALLDQSHGGDAHSKALDAQLAKVKDSSLTPSAQVLAAMAAHKESFAQFSLRQSQAHAEFFRSEPLAAEEQAKFEELARSSLAQQAELEQNEVGDFDVFVGSYQASILAISN</sequence>
<reference key="1">
    <citation type="journal article" date="2009" name="Genome Biol.">
        <title>Genomic and genetic analyses of diversity and plant interactions of Pseudomonas fluorescens.</title>
        <authorList>
            <person name="Silby M.W."/>
            <person name="Cerdeno-Tarraga A.M."/>
            <person name="Vernikos G.S."/>
            <person name="Giddens S.R."/>
            <person name="Jackson R.W."/>
            <person name="Preston G.M."/>
            <person name="Zhang X.-X."/>
            <person name="Moon C.D."/>
            <person name="Gehrig S.M."/>
            <person name="Godfrey S.A.C."/>
            <person name="Knight C.G."/>
            <person name="Malone J.G."/>
            <person name="Robinson Z."/>
            <person name="Spiers A.J."/>
            <person name="Harris S."/>
            <person name="Challis G.L."/>
            <person name="Yaxley A.M."/>
            <person name="Harris D."/>
            <person name="Seeger K."/>
            <person name="Murphy L."/>
            <person name="Rutter S."/>
            <person name="Squares R."/>
            <person name="Quail M.A."/>
            <person name="Saunders E."/>
            <person name="Mavromatis K."/>
            <person name="Brettin T.S."/>
            <person name="Bentley S.D."/>
            <person name="Hothersall J."/>
            <person name="Stephens E."/>
            <person name="Thomas C.M."/>
            <person name="Parkhill J."/>
            <person name="Levy S.B."/>
            <person name="Rainey P.B."/>
            <person name="Thomson N.R."/>
        </authorList>
    </citation>
    <scope>NUCLEOTIDE SEQUENCE [LARGE SCALE GENOMIC DNA]</scope>
    <source>
        <strain>Pf0-1</strain>
    </source>
</reference>
<name>GSH1_PSEPF</name>